<gene>
    <name evidence="1" type="primary">rsmG</name>
    <name type="ordered locus">BLD_1441</name>
</gene>
<proteinExistence type="inferred from homology"/>
<keyword id="KW-0963">Cytoplasm</keyword>
<keyword id="KW-0489">Methyltransferase</keyword>
<keyword id="KW-0698">rRNA processing</keyword>
<keyword id="KW-0949">S-adenosyl-L-methionine</keyword>
<keyword id="KW-0808">Transferase</keyword>
<sequence length="221" mass="24163">MTDQLQGSPVLAEVLGDALPKLERFHAKIAEEGEPRGLIGPRDVDIIWERHILNSAAIVPYVRNATNGIRFKTVADVGSGGGFPGLVAAACLPDHDFTLIEPMERRIEWLHECVGLMQLQNVEIIRGRSDAVIQQVRKREIHPFAVVTCRAVAPMTKLSGWTLPLLKPSGQLIALKGRSAQAEIDKAGKEIAKFGGRRPRVVEAAVGPDLEPTHVVIVDKR</sequence>
<reference key="1">
    <citation type="journal article" date="2008" name="BMC Genomics">
        <title>Comparative genomic analysis of the gut bacterium Bifidobacterium longum reveals loci susceptible to deletion during pure culture growth.</title>
        <authorList>
            <person name="Lee J.H."/>
            <person name="Karamychev V.N."/>
            <person name="Kozyavkin S.A."/>
            <person name="Mills D."/>
            <person name="Pavlov A.R."/>
            <person name="Pavlova N.V."/>
            <person name="Polouchine N.N."/>
            <person name="Richardson P.M."/>
            <person name="Shakhova V.V."/>
            <person name="Slesarev A.I."/>
            <person name="Weimer B."/>
            <person name="O'Sullivan D.J."/>
        </authorList>
    </citation>
    <scope>NUCLEOTIDE SEQUENCE [LARGE SCALE GENOMIC DNA]</scope>
    <source>
        <strain>DJO10A</strain>
    </source>
</reference>
<feature type="chain" id="PRO_1000190214" description="Ribosomal RNA small subunit methyltransferase G">
    <location>
        <begin position="1"/>
        <end position="221"/>
    </location>
</feature>
<feature type="binding site" evidence="1">
    <location>
        <position position="78"/>
    </location>
    <ligand>
        <name>S-adenosyl-L-methionine</name>
        <dbReference type="ChEBI" id="CHEBI:59789"/>
    </ligand>
</feature>
<feature type="binding site" evidence="1">
    <location>
        <position position="83"/>
    </location>
    <ligand>
        <name>S-adenosyl-L-methionine</name>
        <dbReference type="ChEBI" id="CHEBI:59789"/>
    </ligand>
</feature>
<feature type="binding site" evidence="1">
    <location>
        <position position="150"/>
    </location>
    <ligand>
        <name>S-adenosyl-L-methionine</name>
        <dbReference type="ChEBI" id="CHEBI:59789"/>
    </ligand>
</feature>
<organism>
    <name type="scientific">Bifidobacterium longum (strain DJO10A)</name>
    <dbReference type="NCBI Taxonomy" id="205913"/>
    <lineage>
        <taxon>Bacteria</taxon>
        <taxon>Bacillati</taxon>
        <taxon>Actinomycetota</taxon>
        <taxon>Actinomycetes</taxon>
        <taxon>Bifidobacteriales</taxon>
        <taxon>Bifidobacteriaceae</taxon>
        <taxon>Bifidobacterium</taxon>
    </lineage>
</organism>
<evidence type="ECO:0000255" key="1">
    <source>
        <dbReference type="HAMAP-Rule" id="MF_00074"/>
    </source>
</evidence>
<comment type="function">
    <text evidence="1">Specifically methylates the N7 position of a guanine in 16S rRNA.</text>
</comment>
<comment type="subcellular location">
    <subcellularLocation>
        <location evidence="1">Cytoplasm</location>
    </subcellularLocation>
</comment>
<comment type="similarity">
    <text evidence="1">Belongs to the methyltransferase superfamily. RNA methyltransferase RsmG family.</text>
</comment>
<accession>B3DP27</accession>
<protein>
    <recommendedName>
        <fullName evidence="1">Ribosomal RNA small subunit methyltransferase G</fullName>
        <ecNumber evidence="1">2.1.1.-</ecNumber>
    </recommendedName>
    <alternativeName>
        <fullName evidence="1">16S rRNA 7-methylguanosine methyltransferase</fullName>
        <shortName evidence="1">16S rRNA m7G methyltransferase</shortName>
    </alternativeName>
</protein>
<name>RSMG_BIFLD</name>
<dbReference type="EC" id="2.1.1.-" evidence="1"/>
<dbReference type="EMBL" id="CP000605">
    <property type="protein sequence ID" value="ACD98886.1"/>
    <property type="molecule type" value="Genomic_DNA"/>
</dbReference>
<dbReference type="RefSeq" id="WP_007056575.1">
    <property type="nucleotide sequence ID" value="NZ_AABM02000008.1"/>
</dbReference>
<dbReference type="SMR" id="B3DP27"/>
<dbReference type="GeneID" id="69579144"/>
<dbReference type="KEGG" id="blj:BLD_1441"/>
<dbReference type="HOGENOM" id="CLU_065341_5_0_11"/>
<dbReference type="Proteomes" id="UP000002419">
    <property type="component" value="Chromosome"/>
</dbReference>
<dbReference type="GO" id="GO:0005829">
    <property type="term" value="C:cytosol"/>
    <property type="evidence" value="ECO:0007669"/>
    <property type="project" value="TreeGrafter"/>
</dbReference>
<dbReference type="GO" id="GO:0070043">
    <property type="term" value="F:rRNA (guanine-N7-)-methyltransferase activity"/>
    <property type="evidence" value="ECO:0007669"/>
    <property type="project" value="UniProtKB-UniRule"/>
</dbReference>
<dbReference type="Gene3D" id="3.40.50.150">
    <property type="entry name" value="Vaccinia Virus protein VP39"/>
    <property type="match status" value="1"/>
</dbReference>
<dbReference type="HAMAP" id="MF_00074">
    <property type="entry name" value="16SrRNA_methyltr_G"/>
    <property type="match status" value="1"/>
</dbReference>
<dbReference type="InterPro" id="IPR003682">
    <property type="entry name" value="rRNA_ssu_MeTfrase_G"/>
</dbReference>
<dbReference type="InterPro" id="IPR029063">
    <property type="entry name" value="SAM-dependent_MTases_sf"/>
</dbReference>
<dbReference type="NCBIfam" id="TIGR00138">
    <property type="entry name" value="rsmG_gidB"/>
    <property type="match status" value="1"/>
</dbReference>
<dbReference type="PANTHER" id="PTHR31760">
    <property type="entry name" value="S-ADENOSYL-L-METHIONINE-DEPENDENT METHYLTRANSFERASES SUPERFAMILY PROTEIN"/>
    <property type="match status" value="1"/>
</dbReference>
<dbReference type="PANTHER" id="PTHR31760:SF0">
    <property type="entry name" value="S-ADENOSYL-L-METHIONINE-DEPENDENT METHYLTRANSFERASES SUPERFAMILY PROTEIN"/>
    <property type="match status" value="1"/>
</dbReference>
<dbReference type="Pfam" id="PF02527">
    <property type="entry name" value="GidB"/>
    <property type="match status" value="1"/>
</dbReference>
<dbReference type="PIRSF" id="PIRSF003078">
    <property type="entry name" value="GidB"/>
    <property type="match status" value="1"/>
</dbReference>
<dbReference type="SUPFAM" id="SSF53335">
    <property type="entry name" value="S-adenosyl-L-methionine-dependent methyltransferases"/>
    <property type="match status" value="1"/>
</dbReference>